<organism>
    <name type="scientific">Lily symptomless virus</name>
    <name type="common">LSV</name>
    <dbReference type="NCBI Taxonomy" id="12173"/>
    <lineage>
        <taxon>Viruses</taxon>
        <taxon>Riboviria</taxon>
        <taxon>Orthornavirae</taxon>
        <taxon>Kitrinoviricota</taxon>
        <taxon>Alsuviricetes</taxon>
        <taxon>Tymovirales</taxon>
        <taxon>Betaflexiviridae</taxon>
        <taxon>Quinvirinae</taxon>
        <taxon>Carlavirus</taxon>
    </lineage>
</organism>
<accession>P27328</accession>
<reference key="1">
    <citation type="journal article" date="1990" name="J. Gen. Virol.">
        <title>Homologies between the genomes of a carlavirus (lily symptomless virus) and a potexvirus (lily virus X) from lily plants.</title>
        <authorList>
            <person name="Memelink J."/>
            <person name="van der Vlugt C.I.M."/>
            <person name="Linthorst H.J.M."/>
            <person name="Derks A.F.L.M."/>
            <person name="Asjes C.J."/>
            <person name="Bol J.F."/>
        </authorList>
    </citation>
    <scope>NUCLEOTIDE SEQUENCE [GENOMIC RNA]</scope>
</reference>
<sequence length="40" mass="4897">ARERMDEEELEAFYNCVRIIVKNKHLLKSDVRNVYEEQLD</sequence>
<keyword id="KW-0067">ATP-binding</keyword>
<keyword id="KW-0347">Helicase</keyword>
<keyword id="KW-0378">Hydrolase</keyword>
<keyword id="KW-0511">Multifunctional enzyme</keyword>
<keyword id="KW-0547">Nucleotide-binding</keyword>
<keyword id="KW-0548">Nucleotidyltransferase</keyword>
<keyword id="KW-0696">RNA-directed RNA polymerase</keyword>
<keyword id="KW-0808">Transferase</keyword>
<keyword id="KW-0693">Viral RNA replication</keyword>
<evidence type="ECO:0000305" key="1"/>
<name>RDRP_LSV</name>
<proteinExistence type="inferred from homology"/>
<comment type="function">
    <text>RNA replication. The central part of this protein possibly functions as an ATP-binding helicase.</text>
</comment>
<comment type="catalytic activity">
    <reaction>
        <text>RNA(n) + a ribonucleoside 5'-triphosphate = RNA(n+1) + diphosphate</text>
        <dbReference type="Rhea" id="RHEA:21248"/>
        <dbReference type="Rhea" id="RHEA-COMP:14527"/>
        <dbReference type="Rhea" id="RHEA-COMP:17342"/>
        <dbReference type="ChEBI" id="CHEBI:33019"/>
        <dbReference type="ChEBI" id="CHEBI:61557"/>
        <dbReference type="ChEBI" id="CHEBI:140395"/>
        <dbReference type="EC" id="2.7.7.48"/>
    </reaction>
</comment>
<comment type="catalytic activity">
    <reaction>
        <text>ATP + H2O = ADP + phosphate + H(+)</text>
        <dbReference type="Rhea" id="RHEA:13065"/>
        <dbReference type="ChEBI" id="CHEBI:15377"/>
        <dbReference type="ChEBI" id="CHEBI:15378"/>
        <dbReference type="ChEBI" id="CHEBI:30616"/>
        <dbReference type="ChEBI" id="CHEBI:43474"/>
        <dbReference type="ChEBI" id="CHEBI:456216"/>
        <dbReference type="EC" id="3.6.4.13"/>
    </reaction>
</comment>
<comment type="similarity">
    <text evidence="1">Belongs to the potexviruses/carlaviruses RNA replication protein family.</text>
</comment>
<organismHost>
    <name type="scientific">Lilium</name>
    <dbReference type="NCBI Taxonomy" id="4688"/>
</organismHost>
<dbReference type="EC" id="2.7.7.48"/>
<dbReference type="EC" id="3.6.4.13"/>
<dbReference type="EMBL" id="X15343">
    <property type="protein sequence ID" value="CAA33397.1"/>
    <property type="molecule type" value="Genomic_RNA"/>
</dbReference>
<dbReference type="SMR" id="P27328"/>
<dbReference type="GO" id="GO:0005524">
    <property type="term" value="F:ATP binding"/>
    <property type="evidence" value="ECO:0007669"/>
    <property type="project" value="UniProtKB-KW"/>
</dbReference>
<dbReference type="GO" id="GO:0016887">
    <property type="term" value="F:ATP hydrolysis activity"/>
    <property type="evidence" value="ECO:0007669"/>
    <property type="project" value="RHEA"/>
</dbReference>
<dbReference type="GO" id="GO:0003724">
    <property type="term" value="F:RNA helicase activity"/>
    <property type="evidence" value="ECO:0007669"/>
    <property type="project" value="UniProtKB-EC"/>
</dbReference>
<dbReference type="GO" id="GO:0003968">
    <property type="term" value="F:RNA-directed RNA polymerase activity"/>
    <property type="evidence" value="ECO:0007669"/>
    <property type="project" value="UniProtKB-KW"/>
</dbReference>
<protein>
    <recommendedName>
        <fullName>RNA replication protein</fullName>
    </recommendedName>
    <alternativeName>
        <fullName>ORF 1 protein</fullName>
    </alternativeName>
    <domain>
        <recommendedName>
            <fullName>RNA-directed RNA polymerase</fullName>
            <ecNumber>2.7.7.48</ecNumber>
        </recommendedName>
    </domain>
    <domain>
        <recommendedName>
            <fullName>Helicase</fullName>
            <ecNumber>3.6.4.13</ecNumber>
        </recommendedName>
    </domain>
</protein>
<feature type="chain" id="PRO_0000222561" description="RNA replication protein">
    <location>
        <begin position="1" status="less than"/>
        <end position="40"/>
    </location>
</feature>
<feature type="non-terminal residue">
    <location>
        <position position="1"/>
    </location>
</feature>